<accession>P92389</accession>
<accession>Q8MAI7</accession>
<feature type="chain" id="PRO_0000175460" description="DNA-directed RNA polymerase subunit alpha">
    <location>
        <begin position="1"/>
        <end position="339"/>
    </location>
</feature>
<feature type="region of interest" description="Alpha N-terminal domain (alpha-NTD)" evidence="1">
    <location>
        <begin position="1"/>
        <end position="233"/>
    </location>
</feature>
<feature type="region of interest" description="Alpha C-terminal domain (alpha-CTD)" evidence="1">
    <location>
        <begin position="264"/>
        <end position="339"/>
    </location>
</feature>
<name>RPOA_HETPI</name>
<gene>
    <name evidence="1" type="primary">rpoA</name>
</gene>
<protein>
    <recommendedName>
        <fullName evidence="1">DNA-directed RNA polymerase subunit alpha</fullName>
        <shortName evidence="1">PEP</shortName>
        <ecNumber evidence="1">2.7.7.6</ecNumber>
    </recommendedName>
    <alternativeName>
        <fullName evidence="1">Plastid-encoded RNA polymerase subunit alpha</fullName>
        <shortName evidence="1">RNA polymerase subunit alpha</shortName>
    </alternativeName>
</protein>
<keyword id="KW-0150">Chloroplast</keyword>
<keyword id="KW-0240">DNA-directed RNA polymerase</keyword>
<keyword id="KW-0548">Nucleotidyltransferase</keyword>
<keyword id="KW-0934">Plastid</keyword>
<keyword id="KW-0804">Transcription</keyword>
<keyword id="KW-0808">Transferase</keyword>
<geneLocation type="chloroplast"/>
<comment type="function">
    <text evidence="1">DNA-dependent RNA polymerase catalyzes the transcription of DNA into RNA using the four ribonucleoside triphosphates as substrates.</text>
</comment>
<comment type="catalytic activity">
    <reaction evidence="1">
        <text>RNA(n) + a ribonucleoside 5'-triphosphate = RNA(n+1) + diphosphate</text>
        <dbReference type="Rhea" id="RHEA:21248"/>
        <dbReference type="Rhea" id="RHEA-COMP:14527"/>
        <dbReference type="Rhea" id="RHEA-COMP:17342"/>
        <dbReference type="ChEBI" id="CHEBI:33019"/>
        <dbReference type="ChEBI" id="CHEBI:61557"/>
        <dbReference type="ChEBI" id="CHEBI:140395"/>
        <dbReference type="EC" id="2.7.7.6"/>
    </reaction>
</comment>
<comment type="subunit">
    <text evidence="1">In plastids the minimal PEP RNA polymerase catalytic core is composed of four subunits: alpha, beta, beta', and beta''. When a (nuclear-encoded) sigma factor is associated with the core the holoenzyme is formed, which can initiate transcription.</text>
</comment>
<comment type="subcellular location">
    <subcellularLocation>
        <location>Plastid</location>
        <location>Chloroplast</location>
    </subcellularLocation>
</comment>
<comment type="domain">
    <text evidence="1">The N-terminal domain is essential for RNAP assembly and basal transcription, whereas the C-terminal domain is involved in interaction with transcriptional regulators and with upstream promoter elements.</text>
</comment>
<comment type="similarity">
    <text evidence="1">Belongs to the RNA polymerase alpha chain family.</text>
</comment>
<evidence type="ECO:0000255" key="1">
    <source>
        <dbReference type="HAMAP-Rule" id="MF_00059"/>
    </source>
</evidence>
<sequence>MVREEVAGSTQTLQWKCVESRVDSKRLYYGRFILSPLRKGQADTVGIALRRALLGEIEGTCITRAKFWSVPHEYSTIAGIEESVQEILLNLKEIVLRSNLYGVRDASICVKGPKYITAQDIILPPSVEIVDTAQPIANLTEPIDFCIDLQIKRDRGYQTELIKNYQDGSYPIDAVSMPVRNVNYSIFSCGNGNEKHEILFLEIWTNGSLTPKEALYEASRNLIDLFLPFLHAEEEGTSFEENKNRFTPPLFTFQKRLTNLKKNKKGIPLNCIFIDQLELTSRTXNCLKRANIHTLLDLLSKTEEDLLRIDSFRMEDRKHIWDTLEKHLPIDLLKNKLSF</sequence>
<reference key="1">
    <citation type="journal article" date="1997" name="Mol. Phylogenet. Evol.">
        <title>Phylogenetic analysis of the Triticeae (Poaceae) based on rpoA sequence data.</title>
        <authorList>
            <person name="Petersen G."/>
            <person name="Seberg O."/>
        </authorList>
    </citation>
    <scope>NUCLEOTIDE SEQUENCE [GENOMIC DNA]</scope>
    <source>
        <strain>H5557</strain>
        <tissue>Leaf</tissue>
    </source>
</reference>
<reference key="2">
    <citation type="journal article" date="2002" name="Genome">
        <title>Phylogenetic analysis of North American Elymus and the monogenomic Triticeae (Poaceae) using three chloroplast DNA data sets.</title>
        <authorList>
            <person name="Mason-Gamer R.J."/>
            <person name="Orme N.L."/>
            <person name="Anderson C.M."/>
        </authorList>
    </citation>
    <scope>NUCLEOTIDE SEQUENCE [GENOMIC DNA]</scope>
    <source>
        <strain>PI402352</strain>
    </source>
</reference>
<proteinExistence type="inferred from homology"/>
<dbReference type="EC" id="2.7.7.6" evidence="1"/>
<dbReference type="EMBL" id="Z77750">
    <property type="protein sequence ID" value="CAB01327.1"/>
    <property type="molecule type" value="Genomic_DNA"/>
</dbReference>
<dbReference type="EMBL" id="AY115951">
    <property type="protein sequence ID" value="AAM97460.1"/>
    <property type="molecule type" value="Genomic_DNA"/>
</dbReference>
<dbReference type="GO" id="GO:0009507">
    <property type="term" value="C:chloroplast"/>
    <property type="evidence" value="ECO:0007669"/>
    <property type="project" value="UniProtKB-SubCell"/>
</dbReference>
<dbReference type="GO" id="GO:0000428">
    <property type="term" value="C:DNA-directed RNA polymerase complex"/>
    <property type="evidence" value="ECO:0007669"/>
    <property type="project" value="UniProtKB-KW"/>
</dbReference>
<dbReference type="GO" id="GO:0005739">
    <property type="term" value="C:mitochondrion"/>
    <property type="evidence" value="ECO:0007669"/>
    <property type="project" value="GOC"/>
</dbReference>
<dbReference type="GO" id="GO:0003677">
    <property type="term" value="F:DNA binding"/>
    <property type="evidence" value="ECO:0007669"/>
    <property type="project" value="UniProtKB-UniRule"/>
</dbReference>
<dbReference type="GO" id="GO:0003899">
    <property type="term" value="F:DNA-directed RNA polymerase activity"/>
    <property type="evidence" value="ECO:0007669"/>
    <property type="project" value="UniProtKB-UniRule"/>
</dbReference>
<dbReference type="GO" id="GO:0046983">
    <property type="term" value="F:protein dimerization activity"/>
    <property type="evidence" value="ECO:0007669"/>
    <property type="project" value="InterPro"/>
</dbReference>
<dbReference type="GO" id="GO:0006351">
    <property type="term" value="P:DNA-templated transcription"/>
    <property type="evidence" value="ECO:0007669"/>
    <property type="project" value="UniProtKB-UniRule"/>
</dbReference>
<dbReference type="CDD" id="cd06928">
    <property type="entry name" value="RNAP_alpha_NTD"/>
    <property type="match status" value="1"/>
</dbReference>
<dbReference type="FunFam" id="2.170.120.12:FF:000001">
    <property type="entry name" value="DNA-directed RNA polymerase subunit alpha"/>
    <property type="match status" value="1"/>
</dbReference>
<dbReference type="Gene3D" id="1.10.150.20">
    <property type="entry name" value="5' to 3' exonuclease, C-terminal subdomain"/>
    <property type="match status" value="1"/>
</dbReference>
<dbReference type="Gene3D" id="2.170.120.12">
    <property type="entry name" value="DNA-directed RNA polymerase, insert domain"/>
    <property type="match status" value="1"/>
</dbReference>
<dbReference type="Gene3D" id="3.30.1360.10">
    <property type="entry name" value="RNA polymerase, RBP11-like subunit"/>
    <property type="match status" value="1"/>
</dbReference>
<dbReference type="HAMAP" id="MF_00059">
    <property type="entry name" value="RNApol_bact_RpoA"/>
    <property type="match status" value="1"/>
</dbReference>
<dbReference type="InterPro" id="IPR011262">
    <property type="entry name" value="DNA-dir_RNA_pol_insert"/>
</dbReference>
<dbReference type="InterPro" id="IPR011263">
    <property type="entry name" value="DNA-dir_RNA_pol_RpoA/D/Rpb3"/>
</dbReference>
<dbReference type="InterPro" id="IPR011773">
    <property type="entry name" value="DNA-dir_RpoA"/>
</dbReference>
<dbReference type="InterPro" id="IPR036603">
    <property type="entry name" value="RBP11-like"/>
</dbReference>
<dbReference type="InterPro" id="IPR011260">
    <property type="entry name" value="RNAP_asu_C"/>
</dbReference>
<dbReference type="InterPro" id="IPR036643">
    <property type="entry name" value="RNApol_insert_sf"/>
</dbReference>
<dbReference type="NCBIfam" id="TIGR02027">
    <property type="entry name" value="rpoA"/>
    <property type="match status" value="1"/>
</dbReference>
<dbReference type="Pfam" id="PF01000">
    <property type="entry name" value="RNA_pol_A_bac"/>
    <property type="match status" value="1"/>
</dbReference>
<dbReference type="Pfam" id="PF03118">
    <property type="entry name" value="RNA_pol_A_CTD"/>
    <property type="match status" value="1"/>
</dbReference>
<dbReference type="Pfam" id="PF01193">
    <property type="entry name" value="RNA_pol_L"/>
    <property type="match status" value="1"/>
</dbReference>
<dbReference type="SMART" id="SM00662">
    <property type="entry name" value="RPOLD"/>
    <property type="match status" value="1"/>
</dbReference>
<dbReference type="SUPFAM" id="SSF47789">
    <property type="entry name" value="C-terminal domain of RNA polymerase alpha subunit"/>
    <property type="match status" value="1"/>
</dbReference>
<dbReference type="SUPFAM" id="SSF56553">
    <property type="entry name" value="Insert subdomain of RNA polymerase alpha subunit"/>
    <property type="match status" value="1"/>
</dbReference>
<dbReference type="SUPFAM" id="SSF55257">
    <property type="entry name" value="RBP11-like subunits of RNA polymerase"/>
    <property type="match status" value="1"/>
</dbReference>
<organism>
    <name type="scientific">Heteranthelium piliferum</name>
    <name type="common">Elymus pilifer</name>
    <dbReference type="NCBI Taxonomy" id="37679"/>
    <lineage>
        <taxon>Eukaryota</taxon>
        <taxon>Viridiplantae</taxon>
        <taxon>Streptophyta</taxon>
        <taxon>Embryophyta</taxon>
        <taxon>Tracheophyta</taxon>
        <taxon>Spermatophyta</taxon>
        <taxon>Magnoliopsida</taxon>
        <taxon>Liliopsida</taxon>
        <taxon>Poales</taxon>
        <taxon>Poaceae</taxon>
        <taxon>BOP clade</taxon>
        <taxon>Pooideae</taxon>
        <taxon>Triticodae</taxon>
        <taxon>Triticeae</taxon>
        <taxon>Hordeinae</taxon>
        <taxon>Heteranthelium</taxon>
    </lineage>
</organism>